<name>RECO_BACVZ</name>
<accession>A7Z6U2</accession>
<evidence type="ECO:0000255" key="1">
    <source>
        <dbReference type="HAMAP-Rule" id="MF_00201"/>
    </source>
</evidence>
<comment type="function">
    <text evidence="1">Involved in DNA repair and RecF pathway recombination.</text>
</comment>
<comment type="similarity">
    <text evidence="1">Belongs to the RecO family.</text>
</comment>
<dbReference type="EMBL" id="CP000560">
    <property type="protein sequence ID" value="ABS74718.1"/>
    <property type="molecule type" value="Genomic_DNA"/>
</dbReference>
<dbReference type="RefSeq" id="WP_012118014.1">
    <property type="nucleotide sequence ID" value="NC_009725.2"/>
</dbReference>
<dbReference type="SMR" id="A7Z6U2"/>
<dbReference type="GeneID" id="93081495"/>
<dbReference type="KEGG" id="bay:RBAM_023580"/>
<dbReference type="HOGENOM" id="CLU_066632_4_0_9"/>
<dbReference type="Proteomes" id="UP000001120">
    <property type="component" value="Chromosome"/>
</dbReference>
<dbReference type="GO" id="GO:0043590">
    <property type="term" value="C:bacterial nucleoid"/>
    <property type="evidence" value="ECO:0007669"/>
    <property type="project" value="TreeGrafter"/>
</dbReference>
<dbReference type="GO" id="GO:0006310">
    <property type="term" value="P:DNA recombination"/>
    <property type="evidence" value="ECO:0007669"/>
    <property type="project" value="UniProtKB-UniRule"/>
</dbReference>
<dbReference type="GO" id="GO:0006302">
    <property type="term" value="P:double-strand break repair"/>
    <property type="evidence" value="ECO:0007669"/>
    <property type="project" value="TreeGrafter"/>
</dbReference>
<dbReference type="Gene3D" id="2.40.50.140">
    <property type="entry name" value="Nucleic acid-binding proteins"/>
    <property type="match status" value="1"/>
</dbReference>
<dbReference type="Gene3D" id="1.20.1440.120">
    <property type="entry name" value="Recombination protein O, C-terminal domain"/>
    <property type="match status" value="1"/>
</dbReference>
<dbReference type="HAMAP" id="MF_00201">
    <property type="entry name" value="RecO"/>
    <property type="match status" value="1"/>
</dbReference>
<dbReference type="InterPro" id="IPR037278">
    <property type="entry name" value="ARFGAP/RecO"/>
</dbReference>
<dbReference type="InterPro" id="IPR022572">
    <property type="entry name" value="DNA_rep/recomb_RecO_N"/>
</dbReference>
<dbReference type="InterPro" id="IPR012340">
    <property type="entry name" value="NA-bd_OB-fold"/>
</dbReference>
<dbReference type="InterPro" id="IPR003717">
    <property type="entry name" value="RecO"/>
</dbReference>
<dbReference type="InterPro" id="IPR042242">
    <property type="entry name" value="RecO_C"/>
</dbReference>
<dbReference type="NCBIfam" id="TIGR00613">
    <property type="entry name" value="reco"/>
    <property type="match status" value="1"/>
</dbReference>
<dbReference type="PANTHER" id="PTHR33991">
    <property type="entry name" value="DNA REPAIR PROTEIN RECO"/>
    <property type="match status" value="1"/>
</dbReference>
<dbReference type="PANTHER" id="PTHR33991:SF1">
    <property type="entry name" value="DNA REPAIR PROTEIN RECO"/>
    <property type="match status" value="1"/>
</dbReference>
<dbReference type="Pfam" id="PF02565">
    <property type="entry name" value="RecO_C"/>
    <property type="match status" value="1"/>
</dbReference>
<dbReference type="Pfam" id="PF11967">
    <property type="entry name" value="RecO_N"/>
    <property type="match status" value="1"/>
</dbReference>
<dbReference type="SUPFAM" id="SSF57863">
    <property type="entry name" value="ArfGap/RecO-like zinc finger"/>
    <property type="match status" value="1"/>
</dbReference>
<dbReference type="SUPFAM" id="SSF50249">
    <property type="entry name" value="Nucleic acid-binding proteins"/>
    <property type="match status" value="1"/>
</dbReference>
<gene>
    <name evidence="1" type="primary">recO</name>
    <name type="ordered locus">RBAM_023580</name>
</gene>
<sequence>MLTKCEGIVLRTNDYGETNKIVTLLTREHGKIGVMARGARKSASRLSAVSQPFLYGSFLMQRTSGLGTLQQGEMILSMRTIREDLFLTAYAAFIAELTDKGTEEKKPNPYLFELILESFKRLNDGTDPDVITFIVQMKMLGVMGLYPELNHCVHCKSGEGTFHFSIRDNGFICHRCFEKDPYRVPMSPQTARLLRLFYYFDIGRLGSVSLKQETKNEIKRVIDLYYEEYSGLYLKSKRFLDQMESMKNLLDENKS</sequence>
<organism>
    <name type="scientific">Bacillus velezensis (strain DSM 23117 / BGSC 10A6 / LMG 26770 / FZB42)</name>
    <name type="common">Bacillus amyloliquefaciens subsp. plantarum</name>
    <dbReference type="NCBI Taxonomy" id="326423"/>
    <lineage>
        <taxon>Bacteria</taxon>
        <taxon>Bacillati</taxon>
        <taxon>Bacillota</taxon>
        <taxon>Bacilli</taxon>
        <taxon>Bacillales</taxon>
        <taxon>Bacillaceae</taxon>
        <taxon>Bacillus</taxon>
        <taxon>Bacillus amyloliquefaciens group</taxon>
    </lineage>
</organism>
<reference key="1">
    <citation type="journal article" date="2007" name="Nat. Biotechnol.">
        <title>Comparative analysis of the complete genome sequence of the plant growth-promoting bacterium Bacillus amyloliquefaciens FZB42.</title>
        <authorList>
            <person name="Chen X.H."/>
            <person name="Koumoutsi A."/>
            <person name="Scholz R."/>
            <person name="Eisenreich A."/>
            <person name="Schneider K."/>
            <person name="Heinemeyer I."/>
            <person name="Morgenstern B."/>
            <person name="Voss B."/>
            <person name="Hess W.R."/>
            <person name="Reva O."/>
            <person name="Junge H."/>
            <person name="Voigt B."/>
            <person name="Jungblut P.R."/>
            <person name="Vater J."/>
            <person name="Suessmuth R."/>
            <person name="Liesegang H."/>
            <person name="Strittmatter A."/>
            <person name="Gottschalk G."/>
            <person name="Borriss R."/>
        </authorList>
    </citation>
    <scope>NUCLEOTIDE SEQUENCE [LARGE SCALE GENOMIC DNA]</scope>
    <source>
        <strain>DSM 23117 / BGSC 10A6 / LMG 26770 / FZB42</strain>
    </source>
</reference>
<keyword id="KW-0227">DNA damage</keyword>
<keyword id="KW-0233">DNA recombination</keyword>
<keyword id="KW-0234">DNA repair</keyword>
<feature type="chain" id="PRO_1000012120" description="DNA repair protein RecO">
    <location>
        <begin position="1"/>
        <end position="255"/>
    </location>
</feature>
<proteinExistence type="inferred from homology"/>
<protein>
    <recommendedName>
        <fullName evidence="1">DNA repair protein RecO</fullName>
    </recommendedName>
    <alternativeName>
        <fullName evidence="1">Recombination protein O</fullName>
    </alternativeName>
</protein>